<accession>Q9UMR3</accession>
<accession>A4D1Y6</accession>
<accession>Q000T4</accession>
<accession>Q0IJ70</accession>
<accession>Q0VAS1</accession>
<accession>Q9Y2N5</accession>
<reference key="1">
    <citation type="submission" date="2006-09" db="EMBL/GenBank/DDBJ databases">
        <title>Identification of a new human TBX20 splice variant.</title>
        <authorList>
            <person name="Toenjes M."/>
            <person name="Sperling S."/>
        </authorList>
    </citation>
    <scope>NUCLEOTIDE SEQUENCE [MRNA]</scope>
</reference>
<reference key="2">
    <citation type="submission" date="2010-03" db="EMBL/GenBank/DDBJ databases">
        <authorList>
            <person name="Rieder M.J."/>
            <person name="Bertucci C."/>
            <person name="Stanaway I.B."/>
            <person name="Johnson E.J."/>
            <person name="Swanson J.E."/>
            <person name="Siegel D.L."/>
            <person name="da Ponte S.H."/>
            <person name="Igartua C."/>
            <person name="Patterson K."/>
            <person name="Nickerson D.A."/>
        </authorList>
    </citation>
    <scope>NUCLEOTIDE SEQUENCE [GENOMIC DNA]</scope>
</reference>
<reference key="3">
    <citation type="journal article" date="2003" name="Nature">
        <title>The DNA sequence of human chromosome 7.</title>
        <authorList>
            <person name="Hillier L.W."/>
            <person name="Fulton R.S."/>
            <person name="Fulton L.A."/>
            <person name="Graves T.A."/>
            <person name="Pepin K.H."/>
            <person name="Wagner-McPherson C."/>
            <person name="Layman D."/>
            <person name="Maas J."/>
            <person name="Jaeger S."/>
            <person name="Walker R."/>
            <person name="Wylie K."/>
            <person name="Sekhon M."/>
            <person name="Becker M.C."/>
            <person name="O'Laughlin M.D."/>
            <person name="Schaller M.E."/>
            <person name="Fewell G.A."/>
            <person name="Delehaunty K.D."/>
            <person name="Miner T.L."/>
            <person name="Nash W.E."/>
            <person name="Cordes M."/>
            <person name="Du H."/>
            <person name="Sun H."/>
            <person name="Edwards J."/>
            <person name="Bradshaw-Cordum H."/>
            <person name="Ali J."/>
            <person name="Andrews S."/>
            <person name="Isak A."/>
            <person name="Vanbrunt A."/>
            <person name="Nguyen C."/>
            <person name="Du F."/>
            <person name="Lamar B."/>
            <person name="Courtney L."/>
            <person name="Kalicki J."/>
            <person name="Ozersky P."/>
            <person name="Bielicki L."/>
            <person name="Scott K."/>
            <person name="Holmes A."/>
            <person name="Harkins R."/>
            <person name="Harris A."/>
            <person name="Strong C.M."/>
            <person name="Hou S."/>
            <person name="Tomlinson C."/>
            <person name="Dauphin-Kohlberg S."/>
            <person name="Kozlowicz-Reilly A."/>
            <person name="Leonard S."/>
            <person name="Rohlfing T."/>
            <person name="Rock S.M."/>
            <person name="Tin-Wollam A.-M."/>
            <person name="Abbott A."/>
            <person name="Minx P."/>
            <person name="Maupin R."/>
            <person name="Strowmatt C."/>
            <person name="Latreille P."/>
            <person name="Miller N."/>
            <person name="Johnson D."/>
            <person name="Murray J."/>
            <person name="Woessner J.P."/>
            <person name="Wendl M.C."/>
            <person name="Yang S.-P."/>
            <person name="Schultz B.R."/>
            <person name="Wallis J.W."/>
            <person name="Spieth J."/>
            <person name="Bieri T.A."/>
            <person name="Nelson J.O."/>
            <person name="Berkowicz N."/>
            <person name="Wohldmann P.E."/>
            <person name="Cook L.L."/>
            <person name="Hickenbotham M.T."/>
            <person name="Eldred J."/>
            <person name="Williams D."/>
            <person name="Bedell J.A."/>
            <person name="Mardis E.R."/>
            <person name="Clifton S.W."/>
            <person name="Chissoe S.L."/>
            <person name="Marra M.A."/>
            <person name="Raymond C."/>
            <person name="Haugen E."/>
            <person name="Gillett W."/>
            <person name="Zhou Y."/>
            <person name="James R."/>
            <person name="Phelps K."/>
            <person name="Iadanoto S."/>
            <person name="Bubb K."/>
            <person name="Simms E."/>
            <person name="Levy R."/>
            <person name="Clendenning J."/>
            <person name="Kaul R."/>
            <person name="Kent W.J."/>
            <person name="Furey T.S."/>
            <person name="Baertsch R.A."/>
            <person name="Brent M.R."/>
            <person name="Keibler E."/>
            <person name="Flicek P."/>
            <person name="Bork P."/>
            <person name="Suyama M."/>
            <person name="Bailey J.A."/>
            <person name="Portnoy M.E."/>
            <person name="Torrents D."/>
            <person name="Chinwalla A.T."/>
            <person name="Gish W.R."/>
            <person name="Eddy S.R."/>
            <person name="McPherson J.D."/>
            <person name="Olson M.V."/>
            <person name="Eichler E.E."/>
            <person name="Green E.D."/>
            <person name="Waterston R.H."/>
            <person name="Wilson R.K."/>
        </authorList>
    </citation>
    <scope>NUCLEOTIDE SEQUENCE [LARGE SCALE GENOMIC DNA]</scope>
</reference>
<reference key="4">
    <citation type="journal article" date="2003" name="Science">
        <title>Human chromosome 7: DNA sequence and biology.</title>
        <authorList>
            <person name="Scherer S.W."/>
            <person name="Cheung J."/>
            <person name="MacDonald J.R."/>
            <person name="Osborne L.R."/>
            <person name="Nakabayashi K."/>
            <person name="Herbrick J.-A."/>
            <person name="Carson A.R."/>
            <person name="Parker-Katiraee L."/>
            <person name="Skaug J."/>
            <person name="Khaja R."/>
            <person name="Zhang J."/>
            <person name="Hudek A.K."/>
            <person name="Li M."/>
            <person name="Haddad M."/>
            <person name="Duggan G.E."/>
            <person name="Fernandez B.A."/>
            <person name="Kanematsu E."/>
            <person name="Gentles S."/>
            <person name="Christopoulos C.C."/>
            <person name="Choufani S."/>
            <person name="Kwasnicka D."/>
            <person name="Zheng X.H."/>
            <person name="Lai Z."/>
            <person name="Nusskern D.R."/>
            <person name="Zhang Q."/>
            <person name="Gu Z."/>
            <person name="Lu F."/>
            <person name="Zeesman S."/>
            <person name="Nowaczyk M.J."/>
            <person name="Teshima I."/>
            <person name="Chitayat D."/>
            <person name="Shuman C."/>
            <person name="Weksberg R."/>
            <person name="Zackai E.H."/>
            <person name="Grebe T.A."/>
            <person name="Cox S.R."/>
            <person name="Kirkpatrick S.J."/>
            <person name="Rahman N."/>
            <person name="Friedman J.M."/>
            <person name="Heng H.H.Q."/>
            <person name="Pelicci P.G."/>
            <person name="Lo-Coco F."/>
            <person name="Belloni E."/>
            <person name="Shaffer L.G."/>
            <person name="Pober B."/>
            <person name="Morton C.C."/>
            <person name="Gusella J.F."/>
            <person name="Bruns G.A.P."/>
            <person name="Korf B.R."/>
            <person name="Quade B.J."/>
            <person name="Ligon A.H."/>
            <person name="Ferguson H."/>
            <person name="Higgins A.W."/>
            <person name="Leach N.T."/>
            <person name="Herrick S.R."/>
            <person name="Lemyre E."/>
            <person name="Farra C.G."/>
            <person name="Kim H.-G."/>
            <person name="Summers A.M."/>
            <person name="Gripp K.W."/>
            <person name="Roberts W."/>
            <person name="Szatmari P."/>
            <person name="Winsor E.J.T."/>
            <person name="Grzeschik K.-H."/>
            <person name="Teebi A."/>
            <person name="Minassian B.A."/>
            <person name="Kere J."/>
            <person name="Armengol L."/>
            <person name="Pujana M.A."/>
            <person name="Estivill X."/>
            <person name="Wilson M.D."/>
            <person name="Koop B.F."/>
            <person name="Tosi S."/>
            <person name="Moore G.E."/>
            <person name="Boright A.P."/>
            <person name="Zlotorynski E."/>
            <person name="Kerem B."/>
            <person name="Kroisel P.M."/>
            <person name="Petek E."/>
            <person name="Oscier D.G."/>
            <person name="Mould S.J."/>
            <person name="Doehner H."/>
            <person name="Doehner K."/>
            <person name="Rommens J.M."/>
            <person name="Vincent J.B."/>
            <person name="Venter J.C."/>
            <person name="Li P.W."/>
            <person name="Mural R.J."/>
            <person name="Adams M.D."/>
            <person name="Tsui L.-C."/>
        </authorList>
    </citation>
    <scope>NUCLEOTIDE SEQUENCE [LARGE SCALE GENOMIC DNA]</scope>
</reference>
<reference key="5">
    <citation type="journal article" date="2004" name="Genome Res.">
        <title>The status, quality, and expansion of the NIH full-length cDNA project: the Mammalian Gene Collection (MGC).</title>
        <authorList>
            <consortium name="The MGC Project Team"/>
        </authorList>
    </citation>
    <scope>NUCLEOTIDE SEQUENCE [LARGE SCALE MRNA]</scope>
</reference>
<reference key="6">
    <citation type="journal article" date="2000" name="Genomics">
        <title>Characterization of the human TBX20 gene, a new member of the T-box gene family closely related to the Drosophila H15 gene.</title>
        <authorList>
            <person name="Meins M."/>
            <person name="Henderson D.J."/>
            <person name="Bhattacharya S.S."/>
            <person name="Sowden J.C."/>
        </authorList>
    </citation>
    <scope>NUCLEOTIDE SEQUENCE [MRNA] OF 97-296</scope>
    <source>
        <tissue>Fetal eye</tissue>
    </source>
</reference>
<reference key="7">
    <citation type="journal article" date="2007" name="Am. J. Hum. Genet.">
        <title>Mutations in cardiac T-box factor gene TBX20 are associated with diverse cardiac pathologies, including defects of septation and valvulogenesis and cardiomyopathy.</title>
        <authorList>
            <person name="Kirk E.P."/>
            <person name="Sunde M."/>
            <person name="Costa M.W."/>
            <person name="Rankin S.A."/>
            <person name="Wolstein O."/>
            <person name="Castro M.L."/>
            <person name="Butler T.L."/>
            <person name="Hyun C."/>
            <person name="Guo G."/>
            <person name="Otway R."/>
            <person name="Mackay J.P."/>
            <person name="Waddell L.B."/>
            <person name="Cole A.D."/>
            <person name="Hayward C."/>
            <person name="Keogh A."/>
            <person name="Macdonald P."/>
            <person name="Griffiths L."/>
            <person name="Fatkin D."/>
            <person name="Sholler G.F."/>
            <person name="Zorn A.M."/>
            <person name="Feneley M.P."/>
            <person name="Winlaw D.S."/>
            <person name="Harvey R.P."/>
        </authorList>
    </citation>
    <scope>VARIANT ASD4 MET-152</scope>
</reference>
<reference key="8">
    <citation type="journal article" date="2010" name="J. Med. Genet.">
        <title>A gain-of-function TBX20 mutation causes congenital atrial septal defects, patent foramen ovale and cardiac valve defects.</title>
        <authorList>
            <person name="Posch M.G."/>
            <person name="Gramlich M."/>
            <person name="Sunde M."/>
            <person name="Schmitt K.R."/>
            <person name="Lee S.H."/>
            <person name="Richter S."/>
            <person name="Kersten A."/>
            <person name="Perrot A."/>
            <person name="Panek A.N."/>
            <person name="Al Khatib I.H."/>
            <person name="Nemer G."/>
            <person name="Megarbane A."/>
            <person name="Dietz R."/>
            <person name="Stiller B."/>
            <person name="Berger F."/>
            <person name="Harvey R.P."/>
            <person name="Ozcelik C."/>
        </authorList>
    </citation>
    <scope>VARIANTS ASD4 MET-121 AND MET-152</scope>
    <scope>CHARACTERIZATION OF VARIANTS ASD4 MET-121 AND MET-152</scope>
</reference>
<proteinExistence type="evidence at protein level"/>
<sequence length="447" mass="49232">MEFTASPKPQLSSRANAFSIAALMSSGGSKEKEATENTIKPLEQFVEKSSCAQPLGELTSLDAHGEFGGGSGSSPSSSSLCTEPLIPTTPIIPSEEMAKIACSLETKELWDKFHELGTEMIITKSGRRMFPTIRVSFSGVDPEAKYIVLMDIVPVDNKRYRYAYHRSSWLVAGKADPPLPARLYVHPDSPFTGEQLLKQMVSFEKVKLTNNELDQHGHIILNSMHKYQPRVHIIKKKDHTASLLNLKSEEFRTFIFPETVFTAVTAYQNQLITKLKIDSNPFAKGFRDSSRLTDIERESVESLIQKHSYARSPIRTYGGEEDVLGDESQTTPNRGSAFTTSDNLSLSSWVSSSSSFPGFQHPQSLTALGTSTASIATPIPHPIQGSLPPYSRLGMPLTPSAIASSMQGSGPTFPSFHMPRYHHYFQQGPYAAIQGLRHSSAVMTPFV</sequence>
<organism>
    <name type="scientific">Homo sapiens</name>
    <name type="common">Human</name>
    <dbReference type="NCBI Taxonomy" id="9606"/>
    <lineage>
        <taxon>Eukaryota</taxon>
        <taxon>Metazoa</taxon>
        <taxon>Chordata</taxon>
        <taxon>Craniata</taxon>
        <taxon>Vertebrata</taxon>
        <taxon>Euteleostomi</taxon>
        <taxon>Mammalia</taxon>
        <taxon>Eutheria</taxon>
        <taxon>Euarchontoglires</taxon>
        <taxon>Primates</taxon>
        <taxon>Haplorrhini</taxon>
        <taxon>Catarrhini</taxon>
        <taxon>Hominidae</taxon>
        <taxon>Homo</taxon>
    </lineage>
</organism>
<protein>
    <recommendedName>
        <fullName>T-box transcription factor TBX20</fullName>
        <shortName>T-box protein 20</shortName>
    </recommendedName>
</protein>
<gene>
    <name type="primary">TBX20</name>
</gene>
<name>TBX20_HUMAN</name>
<comment type="function">
    <text evidence="1">Acts as a transcriptional activator and repressor required for cardiac development and may have key roles in the maintenance of functional and structural phenotypes in adult heart.</text>
</comment>
<comment type="subcellular location">
    <subcellularLocation>
        <location evidence="2">Nucleus</location>
    </subcellularLocation>
</comment>
<comment type="disease" evidence="4 5">
    <disease id="DI-00152">
        <name>Atrial septal defect 4</name>
        <acronym>ASD4</acronym>
        <description>A congenital heart malformation characterized by incomplete closure of the wall between the atria resulting in blood flow from the left to the right atria. Patients show other heart abnormalities including defects in septation, chamber growth and valvulogenesis. The disease is not associated with defects in the cardiac conduction system or with non-cardiac abnormalities.</description>
        <dbReference type="MIM" id="611363"/>
    </disease>
    <text>The disease is caused by variants affecting the gene represented in this entry.</text>
</comment>
<comment type="sequence caution" evidence="6">
    <conflict type="erroneous gene model prediction">
        <sequence resource="EMBL-CDS" id="AAD21787"/>
    </conflict>
</comment>
<comment type="sequence caution" evidence="6">
    <conflict type="frameshift">
        <sequence resource="EMBL-CDS" id="AAI20946"/>
    </conflict>
</comment>
<comment type="sequence caution" evidence="6">
    <conflict type="miscellaneous discrepancy">
        <sequence resource="EMBL-CDS" id="AAI20946"/>
    </conflict>
    <text>Intron retention.</text>
</comment>
<comment type="sequence caution" evidence="6">
    <conflict type="miscellaneous discrepancy">
        <sequence resource="EMBL-CDS" id="AAI20947"/>
    </conflict>
    <text>Intron retention.</text>
</comment>
<evidence type="ECO:0000250" key="1"/>
<evidence type="ECO:0000255" key="2">
    <source>
        <dbReference type="PROSITE-ProRule" id="PRU00201"/>
    </source>
</evidence>
<evidence type="ECO:0000256" key="3">
    <source>
        <dbReference type="SAM" id="MobiDB-lite"/>
    </source>
</evidence>
<evidence type="ECO:0000269" key="4">
    <source>
    </source>
</evidence>
<evidence type="ECO:0000269" key="5">
    <source>
    </source>
</evidence>
<evidence type="ECO:0000305" key="6"/>
<feature type="chain" id="PRO_0000184451" description="T-box transcription factor TBX20">
    <location>
        <begin position="1"/>
        <end position="447"/>
    </location>
</feature>
<feature type="DNA-binding region" description="T-box" evidence="2">
    <location>
        <begin position="109"/>
        <end position="288"/>
    </location>
</feature>
<feature type="region of interest" description="Disordered" evidence="3">
    <location>
        <begin position="62"/>
        <end position="81"/>
    </location>
</feature>
<feature type="region of interest" description="Disordered" evidence="3">
    <location>
        <begin position="316"/>
        <end position="340"/>
    </location>
</feature>
<feature type="compositionally biased region" description="Polar residues" evidence="3">
    <location>
        <begin position="327"/>
        <end position="340"/>
    </location>
</feature>
<feature type="sequence variant" id="VAR_073144" description="In ASD4; significant gain of function in sequence-specific DNA binding transcription factor activity; gain of function in sequence-specific DNA binding transcription factor activity in the presence of cotranscription factors NKX2-5 and GATA4 or GATA5; dbSNP:rs267607106." evidence="5">
    <original>I</original>
    <variation>M</variation>
    <location>
        <position position="121"/>
    </location>
</feature>
<feature type="sequence variant" id="VAR_036995" description="In ASD4; gain of function in sequence-specific DNA binding transcription factor activity; gain of function in sequence-specific DNA binding transcription factor activity in the presence of cotranscription factors NKX2-5 and GATA4 or GATA5; dbSNP:rs137852954." evidence="4 5">
    <original>I</original>
    <variation>M</variation>
    <location>
        <position position="152"/>
    </location>
</feature>
<keyword id="KW-0976">Atrial septal defect</keyword>
<keyword id="KW-0122">Cardiomyopathy</keyword>
<keyword id="KW-0217">Developmental protein</keyword>
<keyword id="KW-0225">Disease variant</keyword>
<keyword id="KW-0238">DNA-binding</keyword>
<keyword id="KW-0539">Nucleus</keyword>
<keyword id="KW-1267">Proteomics identification</keyword>
<keyword id="KW-1185">Reference proteome</keyword>
<keyword id="KW-0804">Transcription</keyword>
<keyword id="KW-0805">Transcription regulation</keyword>
<dbReference type="EMBL" id="DQ986374">
    <property type="protein sequence ID" value="ABJ15760.1"/>
    <property type="molecule type" value="mRNA"/>
</dbReference>
<dbReference type="EMBL" id="HM015599">
    <property type="protein sequence ID" value="ADL14520.1"/>
    <property type="molecule type" value="Genomic_DNA"/>
</dbReference>
<dbReference type="EMBL" id="AC005826">
    <property type="status" value="NOT_ANNOTATED_CDS"/>
    <property type="molecule type" value="Genomic_DNA"/>
</dbReference>
<dbReference type="EMBL" id="AC009531">
    <property type="status" value="NOT_ANNOTATED_CDS"/>
    <property type="molecule type" value="Genomic_DNA"/>
</dbReference>
<dbReference type="EMBL" id="AC006379">
    <property type="protein sequence ID" value="AAD21787.1"/>
    <property type="status" value="ALT_SEQ"/>
    <property type="molecule type" value="Genomic_DNA"/>
</dbReference>
<dbReference type="EMBL" id="CH236951">
    <property type="protein sequence ID" value="EAL23971.1"/>
    <property type="molecule type" value="Genomic_DNA"/>
</dbReference>
<dbReference type="EMBL" id="BC120945">
    <property type="protein sequence ID" value="AAI20946.1"/>
    <property type="status" value="ALT_SEQ"/>
    <property type="molecule type" value="mRNA"/>
</dbReference>
<dbReference type="EMBL" id="BC120946">
    <property type="protein sequence ID" value="AAI20947.1"/>
    <property type="status" value="ALT_SEQ"/>
    <property type="molecule type" value="mRNA"/>
</dbReference>
<dbReference type="EMBL" id="AJ237589">
    <property type="protein sequence ID" value="CAB51916.1"/>
    <property type="molecule type" value="mRNA"/>
</dbReference>
<dbReference type="CCDS" id="CCDS43568.1"/>
<dbReference type="RefSeq" id="NP_001071121.1">
    <property type="nucleotide sequence ID" value="NM_001077653.2"/>
</dbReference>
<dbReference type="RefSeq" id="NP_001159692.1">
    <property type="nucleotide sequence ID" value="NM_001166220.1"/>
</dbReference>
<dbReference type="SMR" id="Q9UMR3"/>
<dbReference type="BioGRID" id="121349">
    <property type="interactions" value="19"/>
</dbReference>
<dbReference type="CORUM" id="Q9UMR3"/>
<dbReference type="FunCoup" id="Q9UMR3">
    <property type="interactions" value="1602"/>
</dbReference>
<dbReference type="IntAct" id="Q9UMR3">
    <property type="interactions" value="17"/>
</dbReference>
<dbReference type="STRING" id="9606.ENSP00000386170"/>
<dbReference type="iPTMnet" id="Q9UMR3"/>
<dbReference type="PhosphoSitePlus" id="Q9UMR3"/>
<dbReference type="BioMuta" id="TBX20"/>
<dbReference type="DMDM" id="334302934"/>
<dbReference type="MassIVE" id="Q9UMR3"/>
<dbReference type="PaxDb" id="9606-ENSP00000386170"/>
<dbReference type="PeptideAtlas" id="Q9UMR3"/>
<dbReference type="ProteomicsDB" id="85197"/>
<dbReference type="Antibodypedia" id="1814">
    <property type="antibodies" value="161 antibodies from 25 providers"/>
</dbReference>
<dbReference type="DNASU" id="57057"/>
<dbReference type="Ensembl" id="ENST00000408931.4">
    <property type="protein sequence ID" value="ENSP00000386170.3"/>
    <property type="gene ID" value="ENSG00000164532.11"/>
</dbReference>
<dbReference type="GeneID" id="57057"/>
<dbReference type="KEGG" id="hsa:57057"/>
<dbReference type="MANE-Select" id="ENST00000408931.4">
    <property type="protein sequence ID" value="ENSP00000386170.3"/>
    <property type="RefSeq nucleotide sequence ID" value="NM_001077653.2"/>
    <property type="RefSeq protein sequence ID" value="NP_001071121.1"/>
</dbReference>
<dbReference type="UCSC" id="uc011kas.3">
    <property type="organism name" value="human"/>
</dbReference>
<dbReference type="AGR" id="HGNC:11598"/>
<dbReference type="CTD" id="57057"/>
<dbReference type="DisGeNET" id="57057"/>
<dbReference type="GeneCards" id="TBX20"/>
<dbReference type="HGNC" id="HGNC:11598">
    <property type="gene designation" value="TBX20"/>
</dbReference>
<dbReference type="HPA" id="ENSG00000164532">
    <property type="expression patterns" value="Tissue enriched (heart)"/>
</dbReference>
<dbReference type="MalaCards" id="TBX20"/>
<dbReference type="MIM" id="606061">
    <property type="type" value="gene"/>
</dbReference>
<dbReference type="MIM" id="611363">
    <property type="type" value="phenotype"/>
</dbReference>
<dbReference type="neXtProt" id="NX_Q9UMR3"/>
<dbReference type="OpenTargets" id="ENSG00000164532"/>
<dbReference type="Orphanet" id="99103">
    <property type="disease" value="Atrial septal defect, ostium secundum type"/>
</dbReference>
<dbReference type="PharmGKB" id="PA36361"/>
<dbReference type="VEuPathDB" id="HostDB:ENSG00000164532"/>
<dbReference type="eggNOG" id="KOG3586">
    <property type="taxonomic scope" value="Eukaryota"/>
</dbReference>
<dbReference type="GeneTree" id="ENSGT00940000158741"/>
<dbReference type="HOGENOM" id="CLU_014430_7_1_1"/>
<dbReference type="InParanoid" id="Q9UMR3"/>
<dbReference type="OMA" id="EDGHTTH"/>
<dbReference type="OrthoDB" id="7442607at2759"/>
<dbReference type="PAN-GO" id="Q9UMR3">
    <property type="GO annotations" value="6 GO annotations based on evolutionary models"/>
</dbReference>
<dbReference type="PhylomeDB" id="Q9UMR3"/>
<dbReference type="TreeFam" id="TF106341"/>
<dbReference type="PathwayCommons" id="Q9UMR3"/>
<dbReference type="Reactome" id="R-HSA-9733709">
    <property type="pathway name" value="Cardiogenesis"/>
</dbReference>
<dbReference type="SignaLink" id="Q9UMR3"/>
<dbReference type="BioGRID-ORCS" id="57057">
    <property type="hits" value="9 hits in 1167 CRISPR screens"/>
</dbReference>
<dbReference type="GenomeRNAi" id="57057"/>
<dbReference type="Pharos" id="Q9UMR3">
    <property type="development level" value="Tbio"/>
</dbReference>
<dbReference type="PRO" id="PR:Q9UMR3"/>
<dbReference type="Proteomes" id="UP000005640">
    <property type="component" value="Chromosome 7"/>
</dbReference>
<dbReference type="RNAct" id="Q9UMR3">
    <property type="molecule type" value="protein"/>
</dbReference>
<dbReference type="Bgee" id="ENSG00000164532">
    <property type="expression patterns" value="Expressed in right atrium auricular region and 39 other cell types or tissues"/>
</dbReference>
<dbReference type="GO" id="GO:0000785">
    <property type="term" value="C:chromatin"/>
    <property type="evidence" value="ECO:0000247"/>
    <property type="project" value="NTNU_SB"/>
</dbReference>
<dbReference type="GO" id="GO:0005737">
    <property type="term" value="C:cytoplasm"/>
    <property type="evidence" value="ECO:0000250"/>
    <property type="project" value="BHF-UCL"/>
</dbReference>
<dbReference type="GO" id="GO:0005634">
    <property type="term" value="C:nucleus"/>
    <property type="evidence" value="ECO:0000250"/>
    <property type="project" value="BHF-UCL"/>
</dbReference>
<dbReference type="GO" id="GO:0001228">
    <property type="term" value="F:DNA-binding transcription activator activity, RNA polymerase II-specific"/>
    <property type="evidence" value="ECO:0007669"/>
    <property type="project" value="Ensembl"/>
</dbReference>
<dbReference type="GO" id="GO:0000981">
    <property type="term" value="F:DNA-binding transcription factor activity, RNA polymerase II-specific"/>
    <property type="evidence" value="ECO:0000314"/>
    <property type="project" value="BHF-UCL"/>
</dbReference>
<dbReference type="GO" id="GO:0000978">
    <property type="term" value="F:RNA polymerase II cis-regulatory region sequence-specific DNA binding"/>
    <property type="evidence" value="ECO:0000318"/>
    <property type="project" value="GO_Central"/>
</dbReference>
<dbReference type="GO" id="GO:0000977">
    <property type="term" value="F:RNA polymerase II transcription regulatory region sequence-specific DNA binding"/>
    <property type="evidence" value="ECO:0000314"/>
    <property type="project" value="BHF-UCL"/>
</dbReference>
<dbReference type="GO" id="GO:0061629">
    <property type="term" value="F:RNA polymerase II-specific DNA-binding transcription factor binding"/>
    <property type="evidence" value="ECO:0000250"/>
    <property type="project" value="BHF-UCL"/>
</dbReference>
<dbReference type="GO" id="GO:1990837">
    <property type="term" value="F:sequence-specific double-stranded DNA binding"/>
    <property type="evidence" value="ECO:0000314"/>
    <property type="project" value="ARUK-UCL"/>
</dbReference>
<dbReference type="GO" id="GO:0003180">
    <property type="term" value="P:aortic valve morphogenesis"/>
    <property type="evidence" value="ECO:0000315"/>
    <property type="project" value="BHF-UCL"/>
</dbReference>
<dbReference type="GO" id="GO:0060413">
    <property type="term" value="P:atrial septum morphogenesis"/>
    <property type="evidence" value="ECO:0000315"/>
    <property type="project" value="BHF-UCL"/>
</dbReference>
<dbReference type="GO" id="GO:0036302">
    <property type="term" value="P:atrioventricular canal development"/>
    <property type="evidence" value="ECO:0000250"/>
    <property type="project" value="BHF-UCL"/>
</dbReference>
<dbReference type="GO" id="GO:0003171">
    <property type="term" value="P:atrioventricular valve development"/>
    <property type="evidence" value="ECO:0000250"/>
    <property type="project" value="BHF-UCL"/>
</dbReference>
<dbReference type="GO" id="GO:0008015">
    <property type="term" value="P:blood circulation"/>
    <property type="evidence" value="ECO:0007669"/>
    <property type="project" value="Ensembl"/>
</dbReference>
<dbReference type="GO" id="GO:0001569">
    <property type="term" value="P:branching involved in blood vessel morphogenesis"/>
    <property type="evidence" value="ECO:0007669"/>
    <property type="project" value="Ensembl"/>
</dbReference>
<dbReference type="GO" id="GO:0003207">
    <property type="term" value="P:cardiac chamber formation"/>
    <property type="evidence" value="ECO:0000250"/>
    <property type="project" value="BHF-UCL"/>
</dbReference>
<dbReference type="GO" id="GO:0055008">
    <property type="term" value="P:cardiac muscle tissue morphogenesis"/>
    <property type="evidence" value="ECO:0000250"/>
    <property type="project" value="BHF-UCL"/>
</dbReference>
<dbReference type="GO" id="GO:0003215">
    <property type="term" value="P:cardiac right ventricle morphogenesis"/>
    <property type="evidence" value="ECO:0000250"/>
    <property type="project" value="BHF-UCL"/>
</dbReference>
<dbReference type="GO" id="GO:0003279">
    <property type="term" value="P:cardiac septum development"/>
    <property type="evidence" value="ECO:0000250"/>
    <property type="project" value="BHF-UCL"/>
</dbReference>
<dbReference type="GO" id="GO:0001708">
    <property type="term" value="P:cell fate specification"/>
    <property type="evidence" value="ECO:0000318"/>
    <property type="project" value="GO_Central"/>
</dbReference>
<dbReference type="GO" id="GO:0008283">
    <property type="term" value="P:cell population proliferation"/>
    <property type="evidence" value="ECO:0007669"/>
    <property type="project" value="Ensembl"/>
</dbReference>
<dbReference type="GO" id="GO:0009953">
    <property type="term" value="P:dorsal/ventral pattern formation"/>
    <property type="evidence" value="ECO:0000250"/>
    <property type="project" value="BHF-UCL"/>
</dbReference>
<dbReference type="GO" id="GO:0036306">
    <property type="term" value="P:embryonic heart tube elongation"/>
    <property type="evidence" value="ECO:0007669"/>
    <property type="project" value="Ensembl"/>
</dbReference>
<dbReference type="GO" id="GO:0003143">
    <property type="term" value="P:embryonic heart tube morphogenesis"/>
    <property type="evidence" value="ECO:0000250"/>
    <property type="project" value="BHF-UCL"/>
</dbReference>
<dbReference type="GO" id="GO:0003272">
    <property type="term" value="P:endocardial cushion formation"/>
    <property type="evidence" value="ECO:0000250"/>
    <property type="project" value="BHF-UCL"/>
</dbReference>
<dbReference type="GO" id="GO:0003203">
    <property type="term" value="P:endocardial cushion morphogenesis"/>
    <property type="evidence" value="ECO:0000250"/>
    <property type="project" value="BHF-UCL"/>
</dbReference>
<dbReference type="GO" id="GO:0001706">
    <property type="term" value="P:endoderm formation"/>
    <property type="evidence" value="ECO:0000250"/>
    <property type="project" value="BHF-UCL"/>
</dbReference>
<dbReference type="GO" id="GO:0035922">
    <property type="term" value="P:foramen ovale closure"/>
    <property type="evidence" value="ECO:0000315"/>
    <property type="project" value="BHF-UCL"/>
</dbReference>
<dbReference type="GO" id="GO:0001947">
    <property type="term" value="P:heart looping"/>
    <property type="evidence" value="ECO:0000250"/>
    <property type="project" value="BHF-UCL"/>
</dbReference>
<dbReference type="GO" id="GO:0048370">
    <property type="term" value="P:lateral mesoderm formation"/>
    <property type="evidence" value="ECO:0000250"/>
    <property type="project" value="BHF-UCL"/>
</dbReference>
<dbReference type="GO" id="GO:0014031">
    <property type="term" value="P:mesenchymal cell development"/>
    <property type="evidence" value="ECO:0000250"/>
    <property type="project" value="BHF-UCL"/>
</dbReference>
<dbReference type="GO" id="GO:0097475">
    <property type="term" value="P:motor neuron migration"/>
    <property type="evidence" value="ECO:0007669"/>
    <property type="project" value="Ensembl"/>
</dbReference>
<dbReference type="GO" id="GO:0006936">
    <property type="term" value="P:muscle contraction"/>
    <property type="evidence" value="ECO:0007669"/>
    <property type="project" value="Ensembl"/>
</dbReference>
<dbReference type="GO" id="GO:0045892">
    <property type="term" value="P:negative regulation of DNA-templated transcription"/>
    <property type="evidence" value="ECO:0000250"/>
    <property type="project" value="BHF-UCL"/>
</dbReference>
<dbReference type="GO" id="GO:0060392">
    <property type="term" value="P:negative regulation of SMAD protein signal transduction"/>
    <property type="evidence" value="ECO:0007669"/>
    <property type="project" value="Ensembl"/>
</dbReference>
<dbReference type="GO" id="GO:0000122">
    <property type="term" value="P:negative regulation of transcription by RNA polymerase II"/>
    <property type="evidence" value="ECO:0000250"/>
    <property type="project" value="BHF-UCL"/>
</dbReference>
<dbReference type="GO" id="GO:0003148">
    <property type="term" value="P:outflow tract septum morphogenesis"/>
    <property type="evidence" value="ECO:0000315"/>
    <property type="project" value="BHF-UCL"/>
</dbReference>
<dbReference type="GO" id="GO:0003344">
    <property type="term" value="P:pericardium morphogenesis"/>
    <property type="evidence" value="ECO:0000250"/>
    <property type="project" value="BHF-UCL"/>
</dbReference>
<dbReference type="GO" id="GO:0043065">
    <property type="term" value="P:positive regulation of apoptotic process"/>
    <property type="evidence" value="ECO:0007669"/>
    <property type="project" value="Ensembl"/>
</dbReference>
<dbReference type="GO" id="GO:0030513">
    <property type="term" value="P:positive regulation of BMP signaling pathway"/>
    <property type="evidence" value="ECO:0000250"/>
    <property type="project" value="BHF-UCL"/>
</dbReference>
<dbReference type="GO" id="GO:0060045">
    <property type="term" value="P:positive regulation of cardiac muscle cell proliferation"/>
    <property type="evidence" value="ECO:0000250"/>
    <property type="project" value="BHF-UCL"/>
</dbReference>
<dbReference type="GO" id="GO:0090068">
    <property type="term" value="P:positive regulation of cell cycle process"/>
    <property type="evidence" value="ECO:0007669"/>
    <property type="project" value="Ensembl"/>
</dbReference>
<dbReference type="GO" id="GO:0010718">
    <property type="term" value="P:positive regulation of epithelial to mesenchymal transition"/>
    <property type="evidence" value="ECO:0007669"/>
    <property type="project" value="Ensembl"/>
</dbReference>
<dbReference type="GO" id="GO:0003193">
    <property type="term" value="P:pulmonary valve formation"/>
    <property type="evidence" value="ECO:0000250"/>
    <property type="project" value="BHF-UCL"/>
</dbReference>
<dbReference type="GO" id="GO:0060577">
    <property type="term" value="P:pulmonary vein morphogenesis"/>
    <property type="evidence" value="ECO:0000315"/>
    <property type="project" value="BHF-UCL"/>
</dbReference>
<dbReference type="GO" id="GO:0006357">
    <property type="term" value="P:regulation of transcription by RNA polymerase II"/>
    <property type="evidence" value="ECO:0000318"/>
    <property type="project" value="GO_Central"/>
</dbReference>
<dbReference type="GO" id="GO:0003175">
    <property type="term" value="P:tricuspid valve development"/>
    <property type="evidence" value="ECO:0000250"/>
    <property type="project" value="BHF-UCL"/>
</dbReference>
<dbReference type="GO" id="GO:0021524">
    <property type="term" value="P:visceral motor neuron differentiation"/>
    <property type="evidence" value="ECO:0000250"/>
    <property type="project" value="BHF-UCL"/>
</dbReference>
<dbReference type="CDD" id="cd20193">
    <property type="entry name" value="T-box_TBX20-like"/>
    <property type="match status" value="1"/>
</dbReference>
<dbReference type="FunFam" id="2.60.40.820:FF:000008">
    <property type="entry name" value="T-box transcription factor TBX20"/>
    <property type="match status" value="1"/>
</dbReference>
<dbReference type="Gene3D" id="2.60.40.820">
    <property type="entry name" value="Transcription factor, T-box"/>
    <property type="match status" value="1"/>
</dbReference>
<dbReference type="InterPro" id="IPR008967">
    <property type="entry name" value="p53-like_TF_DNA-bd_sf"/>
</dbReference>
<dbReference type="InterPro" id="IPR046360">
    <property type="entry name" value="T-box_DNA-bd"/>
</dbReference>
<dbReference type="InterPro" id="IPR036960">
    <property type="entry name" value="T-box_sf"/>
</dbReference>
<dbReference type="InterPro" id="IPR001699">
    <property type="entry name" value="TF_T-box"/>
</dbReference>
<dbReference type="InterPro" id="IPR018186">
    <property type="entry name" value="TF_T-box_CS"/>
</dbReference>
<dbReference type="PANTHER" id="PTHR11267">
    <property type="entry name" value="T-BOX PROTEIN-RELATED"/>
    <property type="match status" value="1"/>
</dbReference>
<dbReference type="PANTHER" id="PTHR11267:SF190">
    <property type="entry name" value="T-BOX TRANSCRIPTION FACTOR TBX20"/>
    <property type="match status" value="1"/>
</dbReference>
<dbReference type="Pfam" id="PF00907">
    <property type="entry name" value="T-box"/>
    <property type="match status" value="1"/>
</dbReference>
<dbReference type="PRINTS" id="PR00937">
    <property type="entry name" value="TBOX"/>
</dbReference>
<dbReference type="SMART" id="SM00425">
    <property type="entry name" value="TBOX"/>
    <property type="match status" value="1"/>
</dbReference>
<dbReference type="SUPFAM" id="SSF49417">
    <property type="entry name" value="p53-like transcription factors"/>
    <property type="match status" value="1"/>
</dbReference>
<dbReference type="PROSITE" id="PS01283">
    <property type="entry name" value="TBOX_1"/>
    <property type="match status" value="1"/>
</dbReference>
<dbReference type="PROSITE" id="PS01264">
    <property type="entry name" value="TBOX_2"/>
    <property type="match status" value="1"/>
</dbReference>
<dbReference type="PROSITE" id="PS50252">
    <property type="entry name" value="TBOX_3"/>
    <property type="match status" value="1"/>
</dbReference>